<proteinExistence type="inferred from homology"/>
<dbReference type="EC" id="2.4.2.29" evidence="1"/>
<dbReference type="EMBL" id="AM933173">
    <property type="protein sequence ID" value="CAR36316.1"/>
    <property type="molecule type" value="Genomic_DNA"/>
</dbReference>
<dbReference type="RefSeq" id="WP_000667302.1">
    <property type="nucleotide sequence ID" value="NC_011274.1"/>
</dbReference>
<dbReference type="SMR" id="B5R6Q7"/>
<dbReference type="KEGG" id="seg:SG0417"/>
<dbReference type="HOGENOM" id="CLU_022060_0_1_6"/>
<dbReference type="UniPathway" id="UPA00392"/>
<dbReference type="Proteomes" id="UP000008321">
    <property type="component" value="Chromosome"/>
</dbReference>
<dbReference type="GO" id="GO:0005829">
    <property type="term" value="C:cytosol"/>
    <property type="evidence" value="ECO:0007669"/>
    <property type="project" value="TreeGrafter"/>
</dbReference>
<dbReference type="GO" id="GO:0046872">
    <property type="term" value="F:metal ion binding"/>
    <property type="evidence" value="ECO:0007669"/>
    <property type="project" value="UniProtKB-KW"/>
</dbReference>
<dbReference type="GO" id="GO:0008479">
    <property type="term" value="F:tRNA-guanosine(34) queuine transglycosylase activity"/>
    <property type="evidence" value="ECO:0007669"/>
    <property type="project" value="UniProtKB-UniRule"/>
</dbReference>
<dbReference type="GO" id="GO:0008616">
    <property type="term" value="P:queuosine biosynthetic process"/>
    <property type="evidence" value="ECO:0007669"/>
    <property type="project" value="UniProtKB-UniRule"/>
</dbReference>
<dbReference type="GO" id="GO:0002099">
    <property type="term" value="P:tRNA wobble guanine modification"/>
    <property type="evidence" value="ECO:0007669"/>
    <property type="project" value="TreeGrafter"/>
</dbReference>
<dbReference type="GO" id="GO:0101030">
    <property type="term" value="P:tRNA-guanine transglycosylation"/>
    <property type="evidence" value="ECO:0007669"/>
    <property type="project" value="InterPro"/>
</dbReference>
<dbReference type="FunFam" id="3.20.20.105:FF:000001">
    <property type="entry name" value="Queuine tRNA-ribosyltransferase"/>
    <property type="match status" value="1"/>
</dbReference>
<dbReference type="Gene3D" id="3.20.20.105">
    <property type="entry name" value="Queuine tRNA-ribosyltransferase-like"/>
    <property type="match status" value="1"/>
</dbReference>
<dbReference type="HAMAP" id="MF_00168">
    <property type="entry name" value="Q_tRNA_Tgt"/>
    <property type="match status" value="1"/>
</dbReference>
<dbReference type="InterPro" id="IPR050076">
    <property type="entry name" value="ArchSynthase1/Queuine_TRR"/>
</dbReference>
<dbReference type="InterPro" id="IPR004803">
    <property type="entry name" value="TGT"/>
</dbReference>
<dbReference type="InterPro" id="IPR036511">
    <property type="entry name" value="TGT-like_sf"/>
</dbReference>
<dbReference type="InterPro" id="IPR002616">
    <property type="entry name" value="tRNA_ribo_trans-like"/>
</dbReference>
<dbReference type="NCBIfam" id="TIGR00430">
    <property type="entry name" value="Q_tRNA_tgt"/>
    <property type="match status" value="1"/>
</dbReference>
<dbReference type="NCBIfam" id="TIGR00449">
    <property type="entry name" value="tgt_general"/>
    <property type="match status" value="1"/>
</dbReference>
<dbReference type="PANTHER" id="PTHR46499">
    <property type="entry name" value="QUEUINE TRNA-RIBOSYLTRANSFERASE"/>
    <property type="match status" value="1"/>
</dbReference>
<dbReference type="PANTHER" id="PTHR46499:SF1">
    <property type="entry name" value="QUEUINE TRNA-RIBOSYLTRANSFERASE"/>
    <property type="match status" value="1"/>
</dbReference>
<dbReference type="Pfam" id="PF01702">
    <property type="entry name" value="TGT"/>
    <property type="match status" value="1"/>
</dbReference>
<dbReference type="SUPFAM" id="SSF51713">
    <property type="entry name" value="tRNA-guanine transglycosylase"/>
    <property type="match status" value="1"/>
</dbReference>
<comment type="function">
    <text evidence="1">Catalyzes the base-exchange of a guanine (G) residue with the queuine precursor 7-aminomethyl-7-deazaguanine (PreQ1) at position 34 (anticodon wobble position) in tRNAs with GU(N) anticodons (tRNA-Asp, -Asn, -His and -Tyr). Catalysis occurs through a double-displacement mechanism. The nucleophile active site attacks the C1' of nucleotide 34 to detach the guanine base from the RNA, forming a covalent enzyme-RNA intermediate. The proton acceptor active site deprotonates the incoming PreQ1, allowing a nucleophilic attack on the C1' of the ribose to form the product. After dissociation, two additional enzymatic reactions on the tRNA convert PreQ1 to queuine (Q), resulting in the hypermodified nucleoside queuosine (7-(((4,5-cis-dihydroxy-2-cyclopenten-1-yl)amino)methyl)-7-deazaguanosine).</text>
</comment>
<comment type="catalytic activity">
    <reaction evidence="1">
        <text>7-aminomethyl-7-carbaguanine + guanosine(34) in tRNA = 7-aminomethyl-7-carbaguanosine(34) in tRNA + guanine</text>
        <dbReference type="Rhea" id="RHEA:24104"/>
        <dbReference type="Rhea" id="RHEA-COMP:10341"/>
        <dbReference type="Rhea" id="RHEA-COMP:10342"/>
        <dbReference type="ChEBI" id="CHEBI:16235"/>
        <dbReference type="ChEBI" id="CHEBI:58703"/>
        <dbReference type="ChEBI" id="CHEBI:74269"/>
        <dbReference type="ChEBI" id="CHEBI:82833"/>
        <dbReference type="EC" id="2.4.2.29"/>
    </reaction>
</comment>
<comment type="cofactor">
    <cofactor evidence="1">
        <name>Zn(2+)</name>
        <dbReference type="ChEBI" id="CHEBI:29105"/>
    </cofactor>
    <text evidence="1">Binds 1 zinc ion per subunit.</text>
</comment>
<comment type="pathway">
    <text evidence="1">tRNA modification; tRNA-queuosine biosynthesis.</text>
</comment>
<comment type="subunit">
    <text evidence="1">Homodimer. Within each dimer, one monomer is responsible for RNA recognition and catalysis, while the other monomer binds to the replacement base PreQ1.</text>
</comment>
<comment type="similarity">
    <text evidence="1">Belongs to the queuine tRNA-ribosyltransferase family.</text>
</comment>
<feature type="chain" id="PRO_1000097560" description="Queuine tRNA-ribosyltransferase">
    <location>
        <begin position="1"/>
        <end position="375"/>
    </location>
</feature>
<feature type="region of interest" description="RNA binding" evidence="1">
    <location>
        <begin position="245"/>
        <end position="251"/>
    </location>
</feature>
<feature type="region of interest" description="RNA binding; important for wobble base 34 recognition" evidence="1">
    <location>
        <begin position="269"/>
        <end position="273"/>
    </location>
</feature>
<feature type="active site" description="Proton acceptor" evidence="1">
    <location>
        <position position="89"/>
    </location>
</feature>
<feature type="active site" description="Nucleophile" evidence="1">
    <location>
        <position position="264"/>
    </location>
</feature>
<feature type="binding site" evidence="1">
    <location>
        <begin position="89"/>
        <end position="93"/>
    </location>
    <ligand>
        <name>substrate</name>
    </ligand>
</feature>
<feature type="binding site" evidence="1">
    <location>
        <position position="143"/>
    </location>
    <ligand>
        <name>substrate</name>
    </ligand>
</feature>
<feature type="binding site" evidence="1">
    <location>
        <position position="187"/>
    </location>
    <ligand>
        <name>substrate</name>
    </ligand>
</feature>
<feature type="binding site" evidence="1">
    <location>
        <position position="214"/>
    </location>
    <ligand>
        <name>substrate</name>
    </ligand>
</feature>
<feature type="binding site" evidence="1">
    <location>
        <position position="302"/>
    </location>
    <ligand>
        <name>Zn(2+)</name>
        <dbReference type="ChEBI" id="CHEBI:29105"/>
    </ligand>
</feature>
<feature type="binding site" evidence="1">
    <location>
        <position position="304"/>
    </location>
    <ligand>
        <name>Zn(2+)</name>
        <dbReference type="ChEBI" id="CHEBI:29105"/>
    </ligand>
</feature>
<feature type="binding site" evidence="1">
    <location>
        <position position="307"/>
    </location>
    <ligand>
        <name>Zn(2+)</name>
        <dbReference type="ChEBI" id="CHEBI:29105"/>
    </ligand>
</feature>
<feature type="binding site" evidence="1">
    <location>
        <position position="333"/>
    </location>
    <ligand>
        <name>Zn(2+)</name>
        <dbReference type="ChEBI" id="CHEBI:29105"/>
    </ligand>
</feature>
<gene>
    <name evidence="1" type="primary">tgt</name>
    <name type="ordered locus">SG0417</name>
</gene>
<evidence type="ECO:0000255" key="1">
    <source>
        <dbReference type="HAMAP-Rule" id="MF_00168"/>
    </source>
</evidence>
<accession>B5R6Q7</accession>
<sequence>MKFELDTTDGRARRGRLVFDRGIVETPAFMPVGTYGTVKGMTPEEVEATGAQIILGNTFHLWLRPGQEIMKLHGDLHDFMQWKGPILTDSGGFQVFSLGDIRKITEQGVHFRNPINGDPIFLDPEKSMEIQYDLGSDIVMIFDECTPYPADWDYAKRSMEMSLRWAKRSRDRFDSLGNKNALFGIIQGSVYEDLRDISVKGLVEIGFDGYAVGGLAVGEPKADMHRILEHVCPQIPADKPRYLMGVGKPEDLVEGVRRGIDMFDCVMPTRNARNGHLFVTDGVVKIRNAKHKSDTSPLDAECDCYTCRNYSRAYLHHLDRCNEILGARLNTIHNLRYYQRLMAGLRKAIEEGKLESFVTEFYQRQGRPVPPLNVD</sequence>
<name>TGT_SALG2</name>
<protein>
    <recommendedName>
        <fullName evidence="1">Queuine tRNA-ribosyltransferase</fullName>
        <ecNumber evidence="1">2.4.2.29</ecNumber>
    </recommendedName>
    <alternativeName>
        <fullName evidence="1">Guanine insertion enzyme</fullName>
    </alternativeName>
    <alternativeName>
        <fullName evidence="1">tRNA-guanine transglycosylase</fullName>
    </alternativeName>
</protein>
<organism>
    <name type="scientific">Salmonella gallinarum (strain 287/91 / NCTC 13346)</name>
    <dbReference type="NCBI Taxonomy" id="550538"/>
    <lineage>
        <taxon>Bacteria</taxon>
        <taxon>Pseudomonadati</taxon>
        <taxon>Pseudomonadota</taxon>
        <taxon>Gammaproteobacteria</taxon>
        <taxon>Enterobacterales</taxon>
        <taxon>Enterobacteriaceae</taxon>
        <taxon>Salmonella</taxon>
    </lineage>
</organism>
<reference key="1">
    <citation type="journal article" date="2008" name="Genome Res.">
        <title>Comparative genome analysis of Salmonella enteritidis PT4 and Salmonella gallinarum 287/91 provides insights into evolutionary and host adaptation pathways.</title>
        <authorList>
            <person name="Thomson N.R."/>
            <person name="Clayton D.J."/>
            <person name="Windhorst D."/>
            <person name="Vernikos G."/>
            <person name="Davidson S."/>
            <person name="Churcher C."/>
            <person name="Quail M.A."/>
            <person name="Stevens M."/>
            <person name="Jones M.A."/>
            <person name="Watson M."/>
            <person name="Barron A."/>
            <person name="Layton A."/>
            <person name="Pickard D."/>
            <person name="Kingsley R.A."/>
            <person name="Bignell A."/>
            <person name="Clark L."/>
            <person name="Harris B."/>
            <person name="Ormond D."/>
            <person name="Abdellah Z."/>
            <person name="Brooks K."/>
            <person name="Cherevach I."/>
            <person name="Chillingworth T."/>
            <person name="Woodward J."/>
            <person name="Norberczak H."/>
            <person name="Lord A."/>
            <person name="Arrowsmith C."/>
            <person name="Jagels K."/>
            <person name="Moule S."/>
            <person name="Mungall K."/>
            <person name="Saunders M."/>
            <person name="Whitehead S."/>
            <person name="Chabalgoity J.A."/>
            <person name="Maskell D."/>
            <person name="Humphreys T."/>
            <person name="Roberts M."/>
            <person name="Barrow P.A."/>
            <person name="Dougan G."/>
            <person name="Parkhill J."/>
        </authorList>
    </citation>
    <scope>NUCLEOTIDE SEQUENCE [LARGE SCALE GENOMIC DNA]</scope>
    <source>
        <strain>287/91 / NCTC 13346</strain>
    </source>
</reference>
<keyword id="KW-0328">Glycosyltransferase</keyword>
<keyword id="KW-0479">Metal-binding</keyword>
<keyword id="KW-0671">Queuosine biosynthesis</keyword>
<keyword id="KW-0808">Transferase</keyword>
<keyword id="KW-0819">tRNA processing</keyword>
<keyword id="KW-0862">Zinc</keyword>